<gene>
    <name evidence="18" type="primary">TBCK</name>
    <name evidence="20" type="synonym">FERRY1</name>
    <name type="synonym">TBCKL</name>
    <name type="ORF">HSPC302</name>
</gene>
<proteinExistence type="evidence at protein level"/>
<feature type="chain" id="PRO_0000273278" description="TBC domain-containing protein kinase-like protein">
    <location>
        <begin position="1"/>
        <end position="893"/>
    </location>
</feature>
<feature type="domain" description="Protein kinase" evidence="2">
    <location>
        <begin position="1"/>
        <end position="273"/>
    </location>
</feature>
<feature type="domain" description="Rab-GAP TBC" evidence="3">
    <location>
        <begin position="466"/>
        <end position="651"/>
    </location>
</feature>
<feature type="domain" description="Rhodanese" evidence="4">
    <location>
        <begin position="790"/>
        <end position="889"/>
    </location>
</feature>
<feature type="region of interest" description="Disordered" evidence="5">
    <location>
        <begin position="710"/>
        <end position="749"/>
    </location>
</feature>
<feature type="compositionally biased region" description="Low complexity" evidence="5">
    <location>
        <begin position="720"/>
        <end position="729"/>
    </location>
</feature>
<feature type="splice variant" id="VSP_052274" description="In isoform 3." evidence="19">
    <original>SCSTVLCIAFEVLQGLQYMNKHGIVHRALSPHNILLDRKGHIKLAKFGLYHMTAHGDDVDFPIG</original>
    <variation>R</variation>
    <location>
        <begin position="89"/>
        <end position="152"/>
    </location>
</feature>
<feature type="splice variant" id="VSP_052275" description="In isoform 2." evidence="19">
    <location>
        <begin position="161"/>
        <end position="199"/>
    </location>
</feature>
<feature type="sequence variant" id="VAR_041380" description="In dbSNP:rs35784409." evidence="9">
    <original>R</original>
    <variation>L</variation>
    <location>
        <position position="66"/>
    </location>
</feature>
<feature type="sequence variant" id="VAR_041381" description="In dbSNP:rs35835241." evidence="9">
    <original>I</original>
    <variation>M</variation>
    <location>
        <position position="151"/>
    </location>
</feature>
<feature type="sequence variant" id="VAR_041382" description="In dbSNP:rs34770077." evidence="9">
    <original>D</original>
    <variation>N</variation>
    <location>
        <position position="265"/>
    </location>
</feature>
<feature type="sequence variant" id="VAR_030123" description="In dbSNP:rs3775091." evidence="6 8 10 17">
    <original>Q</original>
    <variation>E</variation>
    <location>
        <position position="266"/>
    </location>
</feature>
<feature type="sequence variant" id="VAR_041383" description="In dbSNP:rs34307452." evidence="9">
    <original>T</original>
    <variation>M</variation>
    <location>
        <position position="425"/>
    </location>
</feature>
<feature type="sequence variant" id="VAR_041384" description="In dbSNP:rs34961213." evidence="9">
    <original>M</original>
    <variation>I</variation>
    <location>
        <position position="471"/>
    </location>
</feature>
<feature type="sequence variant" id="VAR_030124" description="In dbSNP:rs2305685." evidence="9">
    <original>K</original>
    <variation>N</variation>
    <location>
        <position position="489"/>
    </location>
</feature>
<feature type="sequence variant" id="VAR_041385" description="In a colorectal adenocarcinoma sample; somatic mutation." evidence="9">
    <original>R</original>
    <variation>I</variation>
    <location>
        <position position="503"/>
    </location>
</feature>
<feature type="sequence variant" id="VAR_077816" description="In IHPRF3; dbSNP:rs869320711." evidence="15">
    <original>R</original>
    <variation>H</variation>
    <location>
        <position position="511"/>
    </location>
</feature>
<feature type="sequence variant" id="VAR_077817" description="In IHPRF3." evidence="14">
    <original>L</original>
    <variation>P</variation>
    <location>
        <position position="551"/>
    </location>
</feature>
<feature type="sequence variant" id="VAR_041386" description="In dbSNP:rs35790205." evidence="9">
    <original>R</original>
    <variation>C</variation>
    <location>
        <position position="692"/>
    </location>
</feature>
<feature type="sequence variant" id="VAR_041387" description="In a head &amp; Neck squamous cell carcinoma sample; somatic mutation." evidence="9">
    <original>I</original>
    <variation>V</variation>
    <location>
        <position position="806"/>
    </location>
</feature>
<feature type="sequence conflict" description="In Ref. 6; AAF28980." evidence="21" ref="6">
    <original>I</original>
    <variation>N</variation>
    <location>
        <position position="601"/>
    </location>
</feature>
<comment type="function">
    <text evidence="11 12 14 16">Component of the FERRY complex (Five-subunit Endosomal Rab5 and RNA/ribosome intermediary) (PubMed:37267905). The FERRY complex directly interacts with mRNAs and RAB5A, and functions as a RAB5A effector involved in the localization and the distribution of specific mRNAs most likely by mediating their endosomal transport. The complex recruits mRNAs and ribosomes to early endosomes through direct mRNA-interaction (PubMed:37267905). Also involved in the modulation of mTOR signaling and expression of mTOR complex components (PubMed:23977024, PubMed:27040691). Involved in the control of actin-cytoskeleton organization (PubMed:23977024).</text>
</comment>
<comment type="subunit">
    <text evidence="16">Component of the FERRY complex composed of five subunits, TBCK, PPP1R21, FERRY3, CRYZL1 and GATD1 with a ratio of 1:2:1:2:4, respectively.</text>
</comment>
<comment type="interaction">
    <interactant intactId="EBI-11142401">
        <id>Q8TEA7</id>
    </interactant>
    <interactant intactId="EBI-5235703">
        <id>Q6ZMI0</id>
        <label>PPP1R21</label>
    </interactant>
    <organismsDiffer>false</organismsDiffer>
    <experiments>2</experiments>
</comment>
<comment type="subcellular location">
    <subcellularLocation>
        <location evidence="11 12">Cytoplasm</location>
    </subcellularLocation>
    <subcellularLocation>
        <location evidence="12">Cytoplasm</location>
        <location evidence="12">Cytoskeleton</location>
        <location evidence="12">Spindle</location>
    </subcellularLocation>
    <subcellularLocation>
        <location evidence="12">Midbody</location>
    </subcellularLocation>
    <subcellularLocation>
        <location evidence="22">Early endosome</location>
    </subcellularLocation>
    <text evidence="12">Mainly localized in the cytoplasm during interphase. During metaphase, TBCK accumulates at the mitotic spindle. At the end of mitosis, it is detected at the midbody.</text>
</comment>
<comment type="alternative products">
    <event type="alternative splicing"/>
    <isoform>
        <id>Q8TEA7-1</id>
        <name evidence="6">1</name>
        <sequence type="displayed"/>
    </isoform>
    <isoform>
        <id>Q8TEA7-2</id>
        <name evidence="7">2</name>
        <sequence type="described" ref="VSP_052275"/>
    </isoform>
    <isoform>
        <id>Q8TEA7-3</id>
        <name evidence="7">3</name>
        <sequence type="described" ref="VSP_052274"/>
    </isoform>
</comment>
<comment type="domain">
    <text evidence="1">The protein kinase domain is predicted to be catalytically inactive.</text>
</comment>
<comment type="disease" evidence="13 14 15">
    <disease id="DI-04694">
        <name>Hypotonia, infantile, with psychomotor retardation and characteristic facies 3</name>
        <acronym>IHPRF3</acronym>
        <description>An autosomal recessive neurodevelopmental disorder characterized by profound developmental disability, intellectual disability and severe hypotonia. Many patients have seizures, and show brain atrophy, dysgenesis of the corpus callosum and white-matter changes on neuroimaging. Non-specific facial dysmorphism is noted in some individuals.</description>
        <dbReference type="MIM" id="616900"/>
    </disease>
    <text>The disease is caused by variants affecting the gene represented in this entry.</text>
</comment>
<comment type="similarity">
    <text evidence="21">Belongs to the protein kinase superfamily.</text>
</comment>
<comment type="sequence caution" evidence="21">
    <conflict type="frameshift">
        <sequence resource="EMBL-CDS" id="AAF28980"/>
    </conflict>
</comment>
<comment type="sequence caution" evidence="21">
    <conflict type="miscellaneous discrepancy">
        <sequence resource="EMBL-CDS" id="BAC05244"/>
    </conflict>
    <text>intron retention.</text>
</comment>
<reference key="1">
    <citation type="journal article" date="2009" name="Genes Cells">
        <title>Identification and characterization of a novel Tre-2/Bub2/Cdc16 (TBC) protein that possesses Rab3A-GAP activity.</title>
        <authorList>
            <person name="Ishibashi K."/>
            <person name="Kanno E."/>
            <person name="Itoh T."/>
            <person name="Fukuda M."/>
        </authorList>
    </citation>
    <scope>NUCLEOTIDE SEQUENCE [MRNA] (ISOFORM 1)</scope>
    <scope>VARIANT GLU-266</scope>
    <source>
        <tissue>Brain</tissue>
    </source>
</reference>
<reference evidence="21 28" key="2">
    <citation type="journal article" date="2004" name="Nat. Genet.">
        <title>Complete sequencing and characterization of 21,243 full-length human cDNAs.</title>
        <authorList>
            <person name="Ota T."/>
            <person name="Suzuki Y."/>
            <person name="Nishikawa T."/>
            <person name="Otsuki T."/>
            <person name="Sugiyama T."/>
            <person name="Irie R."/>
            <person name="Wakamatsu A."/>
            <person name="Hayashi K."/>
            <person name="Sato H."/>
            <person name="Nagai K."/>
            <person name="Kimura K."/>
            <person name="Makita H."/>
            <person name="Sekine M."/>
            <person name="Obayashi M."/>
            <person name="Nishi T."/>
            <person name="Shibahara T."/>
            <person name="Tanaka T."/>
            <person name="Ishii S."/>
            <person name="Yamamoto J."/>
            <person name="Saito K."/>
            <person name="Kawai Y."/>
            <person name="Isono Y."/>
            <person name="Nakamura Y."/>
            <person name="Nagahari K."/>
            <person name="Murakami K."/>
            <person name="Yasuda T."/>
            <person name="Iwayanagi T."/>
            <person name="Wagatsuma M."/>
            <person name="Shiratori A."/>
            <person name="Sudo H."/>
            <person name="Hosoiri T."/>
            <person name="Kaku Y."/>
            <person name="Kodaira H."/>
            <person name="Kondo H."/>
            <person name="Sugawara M."/>
            <person name="Takahashi M."/>
            <person name="Kanda K."/>
            <person name="Yokoi T."/>
            <person name="Furuya T."/>
            <person name="Kikkawa E."/>
            <person name="Omura Y."/>
            <person name="Abe K."/>
            <person name="Kamihara K."/>
            <person name="Katsuta N."/>
            <person name="Sato K."/>
            <person name="Tanikawa M."/>
            <person name="Yamazaki M."/>
            <person name="Ninomiya K."/>
            <person name="Ishibashi T."/>
            <person name="Yamashita H."/>
            <person name="Murakawa K."/>
            <person name="Fujimori K."/>
            <person name="Tanai H."/>
            <person name="Kimata M."/>
            <person name="Watanabe M."/>
            <person name="Hiraoka S."/>
            <person name="Chiba Y."/>
            <person name="Ishida S."/>
            <person name="Ono Y."/>
            <person name="Takiguchi S."/>
            <person name="Watanabe S."/>
            <person name="Yosida M."/>
            <person name="Hotuta T."/>
            <person name="Kusano J."/>
            <person name="Kanehori K."/>
            <person name="Takahashi-Fujii A."/>
            <person name="Hara H."/>
            <person name="Tanase T.-O."/>
            <person name="Nomura Y."/>
            <person name="Togiya S."/>
            <person name="Komai F."/>
            <person name="Hara R."/>
            <person name="Takeuchi K."/>
            <person name="Arita M."/>
            <person name="Imose N."/>
            <person name="Musashino K."/>
            <person name="Yuuki H."/>
            <person name="Oshima A."/>
            <person name="Sasaki N."/>
            <person name="Aotsuka S."/>
            <person name="Yoshikawa Y."/>
            <person name="Matsunawa H."/>
            <person name="Ichihara T."/>
            <person name="Shiohata N."/>
            <person name="Sano S."/>
            <person name="Moriya S."/>
            <person name="Momiyama H."/>
            <person name="Satoh N."/>
            <person name="Takami S."/>
            <person name="Terashima Y."/>
            <person name="Suzuki O."/>
            <person name="Nakagawa S."/>
            <person name="Senoh A."/>
            <person name="Mizoguchi H."/>
            <person name="Goto Y."/>
            <person name="Shimizu F."/>
            <person name="Wakebe H."/>
            <person name="Hishigaki H."/>
            <person name="Watanabe T."/>
            <person name="Sugiyama A."/>
            <person name="Takemoto M."/>
            <person name="Kawakami B."/>
            <person name="Yamazaki M."/>
            <person name="Watanabe K."/>
            <person name="Kumagai A."/>
            <person name="Itakura S."/>
            <person name="Fukuzumi Y."/>
            <person name="Fujimori Y."/>
            <person name="Komiyama M."/>
            <person name="Tashiro H."/>
            <person name="Tanigami A."/>
            <person name="Fujiwara T."/>
            <person name="Ono T."/>
            <person name="Yamada K."/>
            <person name="Fujii Y."/>
            <person name="Ozaki K."/>
            <person name="Hirao M."/>
            <person name="Ohmori Y."/>
            <person name="Kawabata A."/>
            <person name="Hikiji T."/>
            <person name="Kobatake N."/>
            <person name="Inagaki H."/>
            <person name="Ikema Y."/>
            <person name="Okamoto S."/>
            <person name="Okitani R."/>
            <person name="Kawakami T."/>
            <person name="Noguchi S."/>
            <person name="Itoh T."/>
            <person name="Shigeta K."/>
            <person name="Senba T."/>
            <person name="Matsumura K."/>
            <person name="Nakajima Y."/>
            <person name="Mizuno T."/>
            <person name="Morinaga M."/>
            <person name="Sasaki M."/>
            <person name="Togashi T."/>
            <person name="Oyama M."/>
            <person name="Hata H."/>
            <person name="Watanabe M."/>
            <person name="Komatsu T."/>
            <person name="Mizushima-Sugano J."/>
            <person name="Satoh T."/>
            <person name="Shirai Y."/>
            <person name="Takahashi Y."/>
            <person name="Nakagawa K."/>
            <person name="Okumura K."/>
            <person name="Nagase T."/>
            <person name="Nomura N."/>
            <person name="Kikuchi H."/>
            <person name="Masuho Y."/>
            <person name="Yamashita R."/>
            <person name="Nakai K."/>
            <person name="Yada T."/>
            <person name="Nakamura Y."/>
            <person name="Ohara O."/>
            <person name="Isogai T."/>
            <person name="Sugano S."/>
        </authorList>
    </citation>
    <scope>NUCLEOTIDE SEQUENCE [LARGE SCALE MRNA] (ISOFORM 1)</scope>
    <scope>NUCLEOTIDE SEQUENCE [LARGE SCALE MRNA] OF 261-893 (ISOFORMS 1/2/3)</scope>
    <scope>VARIANT GLU-266</scope>
    <source>
        <tissue evidence="28">Hepatoma</tissue>
        <tissue evidence="29">Trachea</tissue>
    </source>
</reference>
<reference evidence="21 27" key="3">
    <citation type="journal article" date="2005" name="Nature">
        <title>Generation and annotation of the DNA sequences of human chromosomes 2 and 4.</title>
        <authorList>
            <person name="Hillier L.W."/>
            <person name="Graves T.A."/>
            <person name="Fulton R.S."/>
            <person name="Fulton L.A."/>
            <person name="Pepin K.H."/>
            <person name="Minx P."/>
            <person name="Wagner-McPherson C."/>
            <person name="Layman D."/>
            <person name="Wylie K."/>
            <person name="Sekhon M."/>
            <person name="Becker M.C."/>
            <person name="Fewell G.A."/>
            <person name="Delehaunty K.D."/>
            <person name="Miner T.L."/>
            <person name="Nash W.E."/>
            <person name="Kremitzki C."/>
            <person name="Oddy L."/>
            <person name="Du H."/>
            <person name="Sun H."/>
            <person name="Bradshaw-Cordum H."/>
            <person name="Ali J."/>
            <person name="Carter J."/>
            <person name="Cordes M."/>
            <person name="Harris A."/>
            <person name="Isak A."/>
            <person name="van Brunt A."/>
            <person name="Nguyen C."/>
            <person name="Du F."/>
            <person name="Courtney L."/>
            <person name="Kalicki J."/>
            <person name="Ozersky P."/>
            <person name="Abbott S."/>
            <person name="Armstrong J."/>
            <person name="Belter E.A."/>
            <person name="Caruso L."/>
            <person name="Cedroni M."/>
            <person name="Cotton M."/>
            <person name="Davidson T."/>
            <person name="Desai A."/>
            <person name="Elliott G."/>
            <person name="Erb T."/>
            <person name="Fronick C."/>
            <person name="Gaige T."/>
            <person name="Haakenson W."/>
            <person name="Haglund K."/>
            <person name="Holmes A."/>
            <person name="Harkins R."/>
            <person name="Kim K."/>
            <person name="Kruchowski S.S."/>
            <person name="Strong C.M."/>
            <person name="Grewal N."/>
            <person name="Goyea E."/>
            <person name="Hou S."/>
            <person name="Levy A."/>
            <person name="Martinka S."/>
            <person name="Mead K."/>
            <person name="McLellan M.D."/>
            <person name="Meyer R."/>
            <person name="Randall-Maher J."/>
            <person name="Tomlinson C."/>
            <person name="Dauphin-Kohlberg S."/>
            <person name="Kozlowicz-Reilly A."/>
            <person name="Shah N."/>
            <person name="Swearengen-Shahid S."/>
            <person name="Snider J."/>
            <person name="Strong J.T."/>
            <person name="Thompson J."/>
            <person name="Yoakum M."/>
            <person name="Leonard S."/>
            <person name="Pearman C."/>
            <person name="Trani L."/>
            <person name="Radionenko M."/>
            <person name="Waligorski J.E."/>
            <person name="Wang C."/>
            <person name="Rock S.M."/>
            <person name="Tin-Wollam A.-M."/>
            <person name="Maupin R."/>
            <person name="Latreille P."/>
            <person name="Wendl M.C."/>
            <person name="Yang S.-P."/>
            <person name="Pohl C."/>
            <person name="Wallis J.W."/>
            <person name="Spieth J."/>
            <person name="Bieri T.A."/>
            <person name="Berkowicz N."/>
            <person name="Nelson J.O."/>
            <person name="Osborne J."/>
            <person name="Ding L."/>
            <person name="Meyer R."/>
            <person name="Sabo A."/>
            <person name="Shotland Y."/>
            <person name="Sinha P."/>
            <person name="Wohldmann P.E."/>
            <person name="Cook L.L."/>
            <person name="Hickenbotham M.T."/>
            <person name="Eldred J."/>
            <person name="Williams D."/>
            <person name="Jones T.A."/>
            <person name="She X."/>
            <person name="Ciccarelli F.D."/>
            <person name="Izaurralde E."/>
            <person name="Taylor J."/>
            <person name="Schmutz J."/>
            <person name="Myers R.M."/>
            <person name="Cox D.R."/>
            <person name="Huang X."/>
            <person name="McPherson J.D."/>
            <person name="Mardis E.R."/>
            <person name="Clifton S.W."/>
            <person name="Warren W.C."/>
            <person name="Chinwalla A.T."/>
            <person name="Eddy S.R."/>
            <person name="Marra M.A."/>
            <person name="Ovcharenko I."/>
            <person name="Furey T.S."/>
            <person name="Miller W."/>
            <person name="Eichler E.E."/>
            <person name="Bork P."/>
            <person name="Suyama M."/>
            <person name="Torrents D."/>
            <person name="Waterston R.H."/>
            <person name="Wilson R.K."/>
        </authorList>
    </citation>
    <scope>NUCLEOTIDE SEQUENCE [LARGE SCALE GENOMIC DNA]</scope>
    <scope>VARIANT GLU-266</scope>
</reference>
<reference evidence="21 23" key="4">
    <citation type="submission" date="2005-07" db="EMBL/GenBank/DDBJ databases">
        <authorList>
            <person name="Mural R.J."/>
            <person name="Istrail S."/>
            <person name="Sutton G.G."/>
            <person name="Florea L."/>
            <person name="Halpern A.L."/>
            <person name="Mobarry C.M."/>
            <person name="Lippert R."/>
            <person name="Walenz B."/>
            <person name="Shatkay H."/>
            <person name="Dew I."/>
            <person name="Miller J.R."/>
            <person name="Flanigan M.J."/>
            <person name="Edwards N.J."/>
            <person name="Bolanos R."/>
            <person name="Fasulo D."/>
            <person name="Halldorsson B.V."/>
            <person name="Hannenhalli S."/>
            <person name="Turner R."/>
            <person name="Yooseph S."/>
            <person name="Lu F."/>
            <person name="Nusskern D.R."/>
            <person name="Shue B.C."/>
            <person name="Zheng X.H."/>
            <person name="Zhong F."/>
            <person name="Delcher A.L."/>
            <person name="Huson D.H."/>
            <person name="Kravitz S.A."/>
            <person name="Mouchard L."/>
            <person name="Reinert K."/>
            <person name="Remington K.A."/>
            <person name="Clark A.G."/>
            <person name="Waterman M.S."/>
            <person name="Eichler E.E."/>
            <person name="Adams M.D."/>
            <person name="Hunkapiller M.W."/>
            <person name="Myers E.W."/>
            <person name="Venter J.C."/>
        </authorList>
    </citation>
    <scope>NUCLEOTIDE SEQUENCE [LARGE SCALE GENOMIC DNA]</scope>
</reference>
<reference evidence="21 26" key="5">
    <citation type="journal article" date="2004" name="Genome Res.">
        <title>The status, quality, and expansion of the NIH full-length cDNA project: the Mammalian Gene Collection (MGC).</title>
        <authorList>
            <consortium name="The MGC Project Team"/>
        </authorList>
    </citation>
    <scope>NUCLEOTIDE SEQUENCE [LARGE SCALE MRNA] (ISOFORMS 2 AND 3)</scope>
    <scope>NUCLEOTIDE SEQUENCE [LARGE SCALE MRNA] OF 608-893 (ISOFORMS 1/2/3)</scope>
    <source>
        <tissue evidence="24">Lymph</tissue>
        <tissue evidence="26">Placenta</tissue>
        <tissue evidence="25">Prostate</tissue>
    </source>
</reference>
<reference evidence="21 23" key="6">
    <citation type="submission" date="1999-05" db="EMBL/GenBank/DDBJ databases">
        <title>Human partial CDS from CD34+ stem cells.</title>
        <authorList>
            <person name="Ye M."/>
            <person name="Zhang Q.-H."/>
            <person name="Zhou J."/>
            <person name="Shen Y."/>
            <person name="Wu X.-Y."/>
            <person name="Guan Z.Q."/>
            <person name="Wang L."/>
            <person name="Fan H.-Y."/>
            <person name="Mao Y.-F."/>
            <person name="Dai M."/>
            <person name="Huang Q.-H."/>
            <person name="Chen S.-J."/>
            <person name="Chen Z."/>
        </authorList>
    </citation>
    <scope>NUCLEOTIDE SEQUENCE [LARGE SCALE MRNA] OF 388-893 (ISOFORMS 1/2/3)</scope>
    <scope>VARIANT GLU-266</scope>
    <source>
        <tissue>Umbilical cord blood</tissue>
    </source>
</reference>
<reference evidence="21" key="7">
    <citation type="journal article" date="2002" name="Science">
        <title>The protein kinase complement of the human genome.</title>
        <authorList>
            <person name="Manning G."/>
            <person name="Whyte D.B."/>
            <person name="Martinez R."/>
            <person name="Hunter T."/>
            <person name="Sudarsanam S."/>
        </authorList>
    </citation>
    <scope>NOMENCLATURE</scope>
</reference>
<reference key="8">
    <citation type="journal article" date="2009" name="Anal. Chem.">
        <title>Lys-N and trypsin cover complementary parts of the phosphoproteome in a refined SCX-based approach.</title>
        <authorList>
            <person name="Gauci S."/>
            <person name="Helbig A.O."/>
            <person name="Slijper M."/>
            <person name="Krijgsveld J."/>
            <person name="Heck A.J."/>
            <person name="Mohammed S."/>
        </authorList>
    </citation>
    <scope>IDENTIFICATION BY MASS SPECTROMETRY [LARGE SCALE ANALYSIS]</scope>
</reference>
<reference key="9">
    <citation type="journal article" date="2013" name="PLoS ONE">
        <title>TBCK influences cell proliferation, cell size and mTOR signaling pathway.</title>
        <authorList>
            <person name="Liu Y."/>
            <person name="Yan X."/>
            <person name="Zhou T."/>
        </authorList>
    </citation>
    <scope>SUBCELLULAR LOCATION</scope>
</reference>
<reference key="10">
    <citation type="journal article" date="2014" name="J. Genet. Genomics">
        <title>A long type of TBCK is a novel cytoplasmic and mitotic apparatus-associated protein likely suppressing cell proliferation.</title>
        <authorList>
            <person name="Wu J."/>
            <person name="Li Q."/>
            <person name="Li Y."/>
            <person name="Lin J."/>
            <person name="Yang D."/>
            <person name="Zhu G."/>
            <person name="Wang L."/>
            <person name="He D."/>
            <person name="Lu G."/>
            <person name="Zeng C."/>
        </authorList>
    </citation>
    <scope>FUNCTION</scope>
    <scope>SUBCELLULAR LOCATION</scope>
</reference>
<reference key="11">
    <citation type="journal article" date="2015" name="Cell Rep.">
        <title>Accelerating novel candidate gene discovery in neurogenetic disorders via whole-exome sequencing of prescreened multiplex consanguineous families.</title>
        <authorList>
            <person name="Alazami A.M."/>
            <person name="Patel N."/>
            <person name="Shamseldin H.E."/>
            <person name="Anazi S."/>
            <person name="Al-Dosari M.S."/>
            <person name="Alzahrani F."/>
            <person name="Hijazi H."/>
            <person name="Alshammari M."/>
            <person name="Aldahmesh M.A."/>
            <person name="Salih M.A."/>
            <person name="Faqeih E."/>
            <person name="Alhashem A."/>
            <person name="Bashiri F.A."/>
            <person name="Al-Owain M."/>
            <person name="Kentab A.Y."/>
            <person name="Sogaty S."/>
            <person name="Al Tala S."/>
            <person name="Temsah M.H."/>
            <person name="Tulbah M."/>
            <person name="Aljelaify R.F."/>
            <person name="Alshahwan S.A."/>
            <person name="Seidahmed M.Z."/>
            <person name="Alhadid A.A."/>
            <person name="Aldhalaan H."/>
            <person name="Alqallaf F."/>
            <person name="Kurdi W."/>
            <person name="Alfadhel M."/>
            <person name="Babay Z."/>
            <person name="Alsogheer M."/>
            <person name="Kaya N."/>
            <person name="Al-Hassnan Z.N."/>
            <person name="Abdel-Salam G.M."/>
            <person name="Al-Sannaa N."/>
            <person name="Al Mutairi F."/>
            <person name="El Khashab H.Y."/>
            <person name="Bohlega S."/>
            <person name="Jia X."/>
            <person name="Nguyen H.C."/>
            <person name="Hammami R."/>
            <person name="Adly N."/>
            <person name="Mohamed J.Y."/>
            <person name="Abdulwahab F."/>
            <person name="Ibrahim N."/>
            <person name="Naim E.A."/>
            <person name="Al-Younes B."/>
            <person name="Meyer B.F."/>
            <person name="Hashem M."/>
            <person name="Shaheen R."/>
            <person name="Xiong Y."/>
            <person name="Abouelhoda M."/>
            <person name="Aldeeri A.A."/>
            <person name="Monies D.M."/>
            <person name="Alkuraya F.S."/>
        </authorList>
    </citation>
    <scope>INVOLVEMENT IN IHPRF3</scope>
</reference>
<reference key="12">
    <citation type="journal article" date="2016" name="Am. J. Hum. Genet.">
        <title>Recessive inactivating mutations in TBCK, encoding a RAB GTPase-activating protein, cause severe infantile syndromic encephalopathy.</title>
        <authorList>
            <consortium name="University of Washington Center for Mendelian Genomics"/>
            <person name="Chong J.X."/>
            <person name="Caputo V."/>
            <person name="Phelps I.G."/>
            <person name="Stella L."/>
            <person name="Worgan L."/>
            <person name="Dempsey J.C."/>
            <person name="Nguyen A."/>
            <person name="Leuzzi V."/>
            <person name="Webster R."/>
            <person name="Pizzuti A."/>
            <person name="Marvin C.T."/>
            <person name="Ishak G.E."/>
            <person name="Ardern-Holmes S."/>
            <person name="Richmond Z."/>
            <person name="Bamshad M.J."/>
            <person name="Ortiz-Gonzalez X.R."/>
            <person name="Tartaglia M."/>
            <person name="Chopra M."/>
            <person name="Doherty D."/>
        </authorList>
    </citation>
    <scope>INVOLVEMENT IN IHPRF3</scope>
    <scope>VARIANT IHPRF3 HIS-511</scope>
</reference>
<reference key="13">
    <citation type="journal article" date="2016" name="Am. J. Hum. Genet.">
        <title>Mutations in TBCK, encoding TBC1-domain-containing kinase, lead to a recognizable syndrome of intellectual disability and hypotonia.</title>
        <authorList>
            <person name="Bhoj E.J."/>
            <person name="Li D."/>
            <person name="Harr M."/>
            <person name="Edvardson S."/>
            <person name="Elpeleg O."/>
            <person name="Chisholm E."/>
            <person name="Juusola J."/>
            <person name="Douglas G."/>
            <person name="Guillen Sacoto M.J."/>
            <person name="Siquier-Pernet K."/>
            <person name="Saadi A."/>
            <person name="Bole-Feysot C."/>
            <person name="Nitschke P."/>
            <person name="Narravula A."/>
            <person name="Walke M."/>
            <person name="Horner M.B."/>
            <person name="Day-Salvatore D.L."/>
            <person name="Jayakar P."/>
            <person name="Vergano S.A."/>
            <person name="Tarnopolsky M.A."/>
            <person name="Hegde M."/>
            <person name="Colleaux L."/>
            <person name="Crino P."/>
            <person name="Hakonarson H."/>
        </authorList>
    </citation>
    <scope>FUNCTION</scope>
    <scope>INVOLVEMENT IN IHPRF3</scope>
    <scope>VARIANT IHPRF3 PRO-551</scope>
</reference>
<reference key="14">
    <citation type="journal article" date="2023" name="Mol. Cell">
        <title>The Rab5 effector FERRY links early endosomes with mRNA localization.</title>
        <authorList>
            <person name="Schuhmacher J.S."/>
            <person name="Tom Dieck S."/>
            <person name="Christoforidis S."/>
            <person name="Landerer C."/>
            <person name="Davila Gallesio J."/>
            <person name="Hersemann L."/>
            <person name="Seifert S."/>
            <person name="Schaefer R."/>
            <person name="Giner A."/>
            <person name="Toth-Petroczy A."/>
            <person name="Kalaidzidis Y."/>
            <person name="Bohnsack K.E."/>
            <person name="Bohnsack M.T."/>
            <person name="Schuman E.M."/>
            <person name="Zerial M."/>
        </authorList>
    </citation>
    <scope>SUBUNIT</scope>
    <scope>IDENTIFICATION IN THE FERRY COMPLEX</scope>
    <scope>FUNCTION</scope>
    <scope>SUBCELLULAR LOCATION</scope>
</reference>
<reference key="15">
    <citation type="journal article" date="2007" name="Nature">
        <title>Patterns of somatic mutation in human cancer genomes.</title>
        <authorList>
            <person name="Greenman C."/>
            <person name="Stephens P."/>
            <person name="Smith R."/>
            <person name="Dalgliesh G.L."/>
            <person name="Hunter C."/>
            <person name="Bignell G."/>
            <person name="Davies H."/>
            <person name="Teague J."/>
            <person name="Butler A."/>
            <person name="Stevens C."/>
            <person name="Edkins S."/>
            <person name="O'Meara S."/>
            <person name="Vastrik I."/>
            <person name="Schmidt E.E."/>
            <person name="Avis T."/>
            <person name="Barthorpe S."/>
            <person name="Bhamra G."/>
            <person name="Buck G."/>
            <person name="Choudhury B."/>
            <person name="Clements J."/>
            <person name="Cole J."/>
            <person name="Dicks E."/>
            <person name="Forbes S."/>
            <person name="Gray K."/>
            <person name="Halliday K."/>
            <person name="Harrison R."/>
            <person name="Hills K."/>
            <person name="Hinton J."/>
            <person name="Jenkinson A."/>
            <person name="Jones D."/>
            <person name="Menzies A."/>
            <person name="Mironenko T."/>
            <person name="Perry J."/>
            <person name="Raine K."/>
            <person name="Richardson D."/>
            <person name="Shepherd R."/>
            <person name="Small A."/>
            <person name="Tofts C."/>
            <person name="Varian J."/>
            <person name="Webb T."/>
            <person name="West S."/>
            <person name="Widaa S."/>
            <person name="Yates A."/>
            <person name="Cahill D.P."/>
            <person name="Louis D.N."/>
            <person name="Goldstraw P."/>
            <person name="Nicholson A.G."/>
            <person name="Brasseur F."/>
            <person name="Looijenga L."/>
            <person name="Weber B.L."/>
            <person name="Chiew Y.-E."/>
            <person name="DeFazio A."/>
            <person name="Greaves M.F."/>
            <person name="Green A.R."/>
            <person name="Campbell P."/>
            <person name="Birney E."/>
            <person name="Easton D.F."/>
            <person name="Chenevix-Trench G."/>
            <person name="Tan M.-H."/>
            <person name="Khoo S.K."/>
            <person name="Teh B.T."/>
            <person name="Yuen S.T."/>
            <person name="Leung S.Y."/>
            <person name="Wooster R."/>
            <person name="Futreal P.A."/>
            <person name="Stratton M.R."/>
        </authorList>
    </citation>
    <scope>VARIANTS [LARGE SCALE ANALYSIS] LEU-66; MET-151; ASN-265; MET-425; ILE-471; ASN-489; ILE-503; CYS-692 AND VAL-806</scope>
</reference>
<organism>
    <name type="scientific">Homo sapiens</name>
    <name type="common">Human</name>
    <dbReference type="NCBI Taxonomy" id="9606"/>
    <lineage>
        <taxon>Eukaryota</taxon>
        <taxon>Metazoa</taxon>
        <taxon>Chordata</taxon>
        <taxon>Craniata</taxon>
        <taxon>Vertebrata</taxon>
        <taxon>Euteleostomi</taxon>
        <taxon>Mammalia</taxon>
        <taxon>Eutheria</taxon>
        <taxon>Euarchontoglires</taxon>
        <taxon>Primates</taxon>
        <taxon>Haplorrhini</taxon>
        <taxon>Catarrhini</taxon>
        <taxon>Hominidae</taxon>
        <taxon>Homo</taxon>
    </lineage>
</organism>
<keyword id="KW-0025">Alternative splicing</keyword>
<keyword id="KW-0963">Cytoplasm</keyword>
<keyword id="KW-0206">Cytoskeleton</keyword>
<keyword id="KW-0225">Disease variant</keyword>
<keyword id="KW-0967">Endosome</keyword>
<keyword id="KW-1267">Proteomics identification</keyword>
<keyword id="KW-1185">Reference proteome</keyword>
<sequence length="893" mass="100679">MFPLKDAEMGAFTFFASALPHDVCGSNGLPLTPNSIKILGRFQILKTITHPRLCQYVDISRGKHERLVVVAEHCERSLEDLLRERKPVSCSTVLCIAFEVLQGLQYMNKHGIVHRALSPHNILLDRKGHIKLAKFGLYHMTAHGDDVDFPIGYPSYLAPEVIAQGIFKTTDHMPSKKPLPSGPKSDVWSLGIILFELCVGRKLFQSLDISERLKFLLTLDCVDDTLIVLAEEHGCLDIIKELPETVIDLLNKCLTFHPSKRPTPDQLMKDKVFSEVSPLYTPFTKPASLFSSSLRCADLTLPEDISQLCKDINNDYLAERSIEEVYYLWCLAGGDLEKELVNKEIIRSKPPICTLPNFLFEDGESFGQGRDRSSLLDDTTVTLSLCQLRNRLKDVGGEAFYPLLEDDQSNLPHSNSNNELSAAATLPLIIREKDTEYQLNRIILFDRLLKAYPYKKNQIWKEARVDIPPLMRGLTWAALLGVEGAIHAKYDAIDKDTPIPTDRQIEVDIPRCHQYDELLSSPEGHAKFRRVLKAWVVSHPDLVYWQGLDSLCAPFLYLNFNNEALAYACMSAFIPKYLYNFFLKDNSHVIQEYLTVFSQMIAFHDPELSNHLNEIGFIPDLYAIPWFLTMFTHVFPLHKIFHLWDTLLLGNSSFPFCIGVAILQQLRDRLLANGFNECILLFSDLPEIDIERCVRESINLFCWTPKSATYRQHAQPPKPSSDSSGGRSSAPYFSAECPDPPKTDLSRESIPLNDLKSEVSPRISAEDLIDLCELTVTGHFKTPSKKTKSSKPKLLVVDIRNSEDFIRGHISGSINIPFSAAFTAEGELTQGPYTAMLQNFKGKVIVIVGHVAKHTAEFAAHLVKMKYPRICILDGGINKIKPTGLLTIPSPQI</sequence>
<accession>Q8TEA7</accession>
<accession>B9A6J1</accession>
<accession>Q4W5B3</accession>
<accession>Q4W5E1</accession>
<accession>Q6NUP4</accession>
<accession>Q8N7M8</accession>
<accession>Q8WW57</accession>
<accession>Q96GV6</accession>
<accession>Q9P080</accession>
<name>TBCK_HUMAN</name>
<evidence type="ECO:0000255" key="1"/>
<evidence type="ECO:0000255" key="2">
    <source>
        <dbReference type="PROSITE-ProRule" id="PRU00159"/>
    </source>
</evidence>
<evidence type="ECO:0000255" key="3">
    <source>
        <dbReference type="PROSITE-ProRule" id="PRU00163"/>
    </source>
</evidence>
<evidence type="ECO:0000255" key="4">
    <source>
        <dbReference type="PROSITE-ProRule" id="PRU00173"/>
    </source>
</evidence>
<evidence type="ECO:0000256" key="5">
    <source>
        <dbReference type="SAM" id="MobiDB-lite"/>
    </source>
</evidence>
<evidence type="ECO:0000269" key="6">
    <source>
    </source>
</evidence>
<evidence type="ECO:0000269" key="7">
    <source>
    </source>
</evidence>
<evidence type="ECO:0000269" key="8">
    <source>
    </source>
</evidence>
<evidence type="ECO:0000269" key="9">
    <source>
    </source>
</evidence>
<evidence type="ECO:0000269" key="10">
    <source>
    </source>
</evidence>
<evidence type="ECO:0000269" key="11">
    <source>
    </source>
</evidence>
<evidence type="ECO:0000269" key="12">
    <source>
    </source>
</evidence>
<evidence type="ECO:0000269" key="13">
    <source>
    </source>
</evidence>
<evidence type="ECO:0000269" key="14">
    <source>
    </source>
</evidence>
<evidence type="ECO:0000269" key="15">
    <source>
    </source>
</evidence>
<evidence type="ECO:0000269" key="16">
    <source>
    </source>
</evidence>
<evidence type="ECO:0000269" key="17">
    <source ref="6"/>
</evidence>
<evidence type="ECO:0000303" key="18">
    <source>
    </source>
</evidence>
<evidence type="ECO:0000303" key="19">
    <source>
    </source>
</evidence>
<evidence type="ECO:0000303" key="20">
    <source>
    </source>
</evidence>
<evidence type="ECO:0000305" key="21"/>
<evidence type="ECO:0000305" key="22">
    <source>
    </source>
</evidence>
<evidence type="ECO:0000312" key="23">
    <source>
        <dbReference type="EMBL" id="AAF28980.1"/>
    </source>
</evidence>
<evidence type="ECO:0000312" key="24">
    <source>
        <dbReference type="EMBL" id="AAH09208.2"/>
    </source>
</evidence>
<evidence type="ECO:0000312" key="25">
    <source>
        <dbReference type="EMBL" id="AAH20853.2"/>
    </source>
</evidence>
<evidence type="ECO:0000312" key="26">
    <source>
        <dbReference type="EMBL" id="AAH68496.1"/>
    </source>
</evidence>
<evidence type="ECO:0000312" key="27">
    <source>
        <dbReference type="EMBL" id="AAY40979.1"/>
    </source>
</evidence>
<evidence type="ECO:0000312" key="28">
    <source>
        <dbReference type="EMBL" id="BAB85045.1"/>
    </source>
</evidence>
<evidence type="ECO:0000312" key="29">
    <source>
        <dbReference type="EMBL" id="BAC05244.1"/>
    </source>
</evidence>
<dbReference type="EMBL" id="AB449876">
    <property type="protein sequence ID" value="BAH16619.1"/>
    <property type="molecule type" value="mRNA"/>
</dbReference>
<dbReference type="EMBL" id="AK074305">
    <property type="protein sequence ID" value="BAB85045.1"/>
    <property type="molecule type" value="mRNA"/>
</dbReference>
<dbReference type="EMBL" id="AK098157">
    <property type="protein sequence ID" value="BAC05244.1"/>
    <property type="status" value="ALT_SEQ"/>
    <property type="molecule type" value="mRNA"/>
</dbReference>
<dbReference type="EMBL" id="AC093680">
    <property type="status" value="NOT_ANNOTATED_CDS"/>
    <property type="molecule type" value="Genomic_DNA"/>
</dbReference>
<dbReference type="EMBL" id="AC107381">
    <property type="protein sequence ID" value="AAY40979.1"/>
    <property type="molecule type" value="Genomic_DNA"/>
</dbReference>
<dbReference type="EMBL" id="AC109361">
    <property type="status" value="NOT_ANNOTATED_CDS"/>
    <property type="molecule type" value="Genomic_DNA"/>
</dbReference>
<dbReference type="EMBL" id="AC114734">
    <property type="protein sequence ID" value="AAY41041.1"/>
    <property type="molecule type" value="Genomic_DNA"/>
</dbReference>
<dbReference type="EMBL" id="AC125469">
    <property type="status" value="NOT_ANNOTATED_CDS"/>
    <property type="molecule type" value="Genomic_DNA"/>
</dbReference>
<dbReference type="EMBL" id="AP001820">
    <property type="status" value="NOT_ANNOTATED_CDS"/>
    <property type="molecule type" value="Genomic_DNA"/>
</dbReference>
<dbReference type="EMBL" id="CH471057">
    <property type="protein sequence ID" value="EAX06201.1"/>
    <property type="molecule type" value="Genomic_DNA"/>
</dbReference>
<dbReference type="EMBL" id="BC009208">
    <property type="protein sequence ID" value="AAH09208.2"/>
    <property type="molecule type" value="mRNA"/>
</dbReference>
<dbReference type="EMBL" id="BC020853">
    <property type="protein sequence ID" value="AAH20853.2"/>
    <property type="molecule type" value="mRNA"/>
</dbReference>
<dbReference type="EMBL" id="BC068496">
    <property type="protein sequence ID" value="AAH68496.1"/>
    <property type="molecule type" value="mRNA"/>
</dbReference>
<dbReference type="EMBL" id="AF161420">
    <property type="protein sequence ID" value="AAF28980.1"/>
    <property type="status" value="ALT_FRAME"/>
    <property type="molecule type" value="mRNA"/>
</dbReference>
<dbReference type="CCDS" id="CCDS3673.1">
    <molecule id="Q8TEA7-3"/>
</dbReference>
<dbReference type="CCDS" id="CCDS54788.1">
    <molecule id="Q8TEA7-1"/>
</dbReference>
<dbReference type="CCDS" id="CCDS54789.1">
    <molecule id="Q8TEA7-2"/>
</dbReference>
<dbReference type="RefSeq" id="NP_001156907.2">
    <molecule id="Q8TEA7-1"/>
    <property type="nucleotide sequence ID" value="NM_001163435.3"/>
</dbReference>
<dbReference type="RefSeq" id="NP_001156908.2">
    <molecule id="Q8TEA7-1"/>
    <property type="nucleotide sequence ID" value="NM_001163436.4"/>
</dbReference>
<dbReference type="RefSeq" id="NP_001156909.2">
    <molecule id="Q8TEA7-2"/>
    <property type="nucleotide sequence ID" value="NM_001163437.3"/>
</dbReference>
<dbReference type="RefSeq" id="NP_149106.2">
    <molecule id="Q8TEA7-3"/>
    <property type="nucleotide sequence ID" value="NM_033115.4"/>
</dbReference>
<dbReference type="RefSeq" id="XP_011530719.1">
    <molecule id="Q8TEA7-1"/>
    <property type="nucleotide sequence ID" value="XM_011532417.3"/>
</dbReference>
<dbReference type="RefSeq" id="XP_016864335.1">
    <molecule id="Q8TEA7-1"/>
    <property type="nucleotide sequence ID" value="XM_017008846.2"/>
</dbReference>
<dbReference type="RefSeq" id="XP_024310049.1">
    <molecule id="Q8TEA7-1"/>
    <property type="nucleotide sequence ID" value="XM_024454281.2"/>
</dbReference>
<dbReference type="RefSeq" id="XP_047272381.1">
    <molecule id="Q8TEA7-3"/>
    <property type="nucleotide sequence ID" value="XM_047416425.1"/>
</dbReference>
<dbReference type="SMR" id="Q8TEA7"/>
<dbReference type="BioGRID" id="125042">
    <property type="interactions" value="84"/>
</dbReference>
<dbReference type="ComplexPortal" id="CPX-2540">
    <property type="entry name" value="FERRY RAB5 effector complex"/>
</dbReference>
<dbReference type="FunCoup" id="Q8TEA7">
    <property type="interactions" value="1307"/>
</dbReference>
<dbReference type="IntAct" id="Q8TEA7">
    <property type="interactions" value="76"/>
</dbReference>
<dbReference type="MINT" id="Q8TEA7"/>
<dbReference type="STRING" id="9606.ENSP00000378198"/>
<dbReference type="GlyGen" id="Q8TEA7">
    <property type="glycosylation" value="1 site, 1 O-linked glycan (1 site)"/>
</dbReference>
<dbReference type="iPTMnet" id="Q8TEA7"/>
<dbReference type="PhosphoSitePlus" id="Q8TEA7"/>
<dbReference type="BioMuta" id="TBCK"/>
<dbReference type="DMDM" id="317373548"/>
<dbReference type="CPTAC" id="non-CPTAC-5647"/>
<dbReference type="jPOST" id="Q8TEA7"/>
<dbReference type="MassIVE" id="Q8TEA7"/>
<dbReference type="PaxDb" id="9606-ENSP00000273980"/>
<dbReference type="PeptideAtlas" id="Q8TEA7"/>
<dbReference type="ProteomicsDB" id="74430">
    <molecule id="Q8TEA7-1"/>
</dbReference>
<dbReference type="ProteomicsDB" id="74431">
    <molecule id="Q8TEA7-2"/>
</dbReference>
<dbReference type="ProteomicsDB" id="74432">
    <molecule id="Q8TEA7-3"/>
</dbReference>
<dbReference type="Pumba" id="Q8TEA7"/>
<dbReference type="Antibodypedia" id="26201">
    <property type="antibodies" value="128 antibodies from 20 providers"/>
</dbReference>
<dbReference type="DNASU" id="93627"/>
<dbReference type="Ensembl" id="ENST00000273980.10">
    <molecule id="Q8TEA7-1"/>
    <property type="protein sequence ID" value="ENSP00000273980.4"/>
    <property type="gene ID" value="ENSG00000145348.17"/>
</dbReference>
<dbReference type="Ensembl" id="ENST00000361687.8">
    <molecule id="Q8TEA7-3"/>
    <property type="protein sequence ID" value="ENSP00000355338.4"/>
    <property type="gene ID" value="ENSG00000145348.17"/>
</dbReference>
<dbReference type="Ensembl" id="ENST00000394706.7">
    <molecule id="Q8TEA7-2"/>
    <property type="protein sequence ID" value="ENSP00000378196.3"/>
    <property type="gene ID" value="ENSG00000145348.17"/>
</dbReference>
<dbReference type="Ensembl" id="ENST00000394708.7">
    <molecule id="Q8TEA7-1"/>
    <property type="protein sequence ID" value="ENSP00000378198.2"/>
    <property type="gene ID" value="ENSG00000145348.17"/>
</dbReference>
<dbReference type="GeneID" id="93627"/>
<dbReference type="KEGG" id="hsa:93627"/>
<dbReference type="MANE-Select" id="ENST00000394708.7">
    <property type="protein sequence ID" value="ENSP00000378198.2"/>
    <property type="RefSeq nucleotide sequence ID" value="NM_001163435.3"/>
    <property type="RefSeq protein sequence ID" value="NP_001156907.2"/>
</dbReference>
<dbReference type="UCSC" id="uc003hyc.3">
    <molecule id="Q8TEA7-1"/>
    <property type="organism name" value="human"/>
</dbReference>
<dbReference type="AGR" id="HGNC:28261"/>
<dbReference type="CTD" id="93627"/>
<dbReference type="DisGeNET" id="93627"/>
<dbReference type="GeneCards" id="TBCK"/>
<dbReference type="HGNC" id="HGNC:28261">
    <property type="gene designation" value="TBCK"/>
</dbReference>
<dbReference type="HPA" id="ENSG00000145348">
    <property type="expression patterns" value="Low tissue specificity"/>
</dbReference>
<dbReference type="MalaCards" id="TBCK"/>
<dbReference type="MIM" id="616899">
    <property type="type" value="gene"/>
</dbReference>
<dbReference type="MIM" id="616900">
    <property type="type" value="phenotype"/>
</dbReference>
<dbReference type="neXtProt" id="NX_Q8TEA7"/>
<dbReference type="OpenTargets" id="ENSG00000145348"/>
<dbReference type="Orphanet" id="488632">
    <property type="disease" value="TBCK-related intellectual disability syndrome"/>
</dbReference>
<dbReference type="PharmGKB" id="PA165664603"/>
<dbReference type="VEuPathDB" id="HostDB:ENSG00000145348"/>
<dbReference type="eggNOG" id="KOG1093">
    <property type="taxonomic scope" value="Eukaryota"/>
</dbReference>
<dbReference type="GeneTree" id="ENSGT00940000158244"/>
<dbReference type="HOGENOM" id="CLU_011160_0_0_1"/>
<dbReference type="InParanoid" id="Q8TEA7"/>
<dbReference type="OMA" id="THTDRQI"/>
<dbReference type="OrthoDB" id="1668230at2759"/>
<dbReference type="PAN-GO" id="Q8TEA7">
    <property type="GO annotations" value="2 GO annotations based on evolutionary models"/>
</dbReference>
<dbReference type="PhylomeDB" id="Q8TEA7"/>
<dbReference type="TreeFam" id="TF106242"/>
<dbReference type="PathwayCommons" id="Q8TEA7"/>
<dbReference type="SignaLink" id="Q8TEA7"/>
<dbReference type="SIGNOR" id="Q8TEA7"/>
<dbReference type="BioGRID-ORCS" id="93627">
    <property type="hits" value="17 hits in 1188 CRISPR screens"/>
</dbReference>
<dbReference type="ChiTaRS" id="TBCK">
    <property type="organism name" value="human"/>
</dbReference>
<dbReference type="GenomeRNAi" id="93627"/>
<dbReference type="Pharos" id="Q8TEA7">
    <property type="development level" value="Tbio"/>
</dbReference>
<dbReference type="PRO" id="PR:Q8TEA7"/>
<dbReference type="Proteomes" id="UP000005640">
    <property type="component" value="Chromosome 4"/>
</dbReference>
<dbReference type="RNAct" id="Q8TEA7">
    <property type="molecule type" value="protein"/>
</dbReference>
<dbReference type="Bgee" id="ENSG00000145348">
    <property type="expression patterns" value="Expressed in kidney epithelium and 188 other cell types or tissues"/>
</dbReference>
<dbReference type="ExpressionAtlas" id="Q8TEA7">
    <property type="expression patterns" value="baseline and differential"/>
</dbReference>
<dbReference type="GO" id="GO:0005737">
    <property type="term" value="C:cytoplasm"/>
    <property type="evidence" value="ECO:0000314"/>
    <property type="project" value="UniProtKB"/>
</dbReference>
<dbReference type="GO" id="GO:0005769">
    <property type="term" value="C:early endosome"/>
    <property type="evidence" value="ECO:0007669"/>
    <property type="project" value="UniProtKB-SubCell"/>
</dbReference>
<dbReference type="GO" id="GO:0030496">
    <property type="term" value="C:midbody"/>
    <property type="evidence" value="ECO:0000314"/>
    <property type="project" value="UniProtKB"/>
</dbReference>
<dbReference type="GO" id="GO:0072686">
    <property type="term" value="C:mitotic spindle"/>
    <property type="evidence" value="ECO:0000314"/>
    <property type="project" value="UniProtKB"/>
</dbReference>
<dbReference type="GO" id="GO:0005524">
    <property type="term" value="F:ATP binding"/>
    <property type="evidence" value="ECO:0000303"/>
    <property type="project" value="UniProtKB"/>
</dbReference>
<dbReference type="GO" id="GO:0005096">
    <property type="term" value="F:GTPase activator activity"/>
    <property type="evidence" value="ECO:0000318"/>
    <property type="project" value="GO_Central"/>
</dbReference>
<dbReference type="GO" id="GO:0004672">
    <property type="term" value="F:protein kinase activity"/>
    <property type="evidence" value="ECO:0000303"/>
    <property type="project" value="UniProtKB"/>
</dbReference>
<dbReference type="GO" id="GO:0030036">
    <property type="term" value="P:actin cytoskeleton organization"/>
    <property type="evidence" value="ECO:0000315"/>
    <property type="project" value="UniProtKB"/>
</dbReference>
<dbReference type="GO" id="GO:0008283">
    <property type="term" value="P:cell population proliferation"/>
    <property type="evidence" value="ECO:0000315"/>
    <property type="project" value="UniProtKB"/>
</dbReference>
<dbReference type="GO" id="GO:0032006">
    <property type="term" value="P:regulation of TOR signaling"/>
    <property type="evidence" value="ECO:0000315"/>
    <property type="project" value="UniProtKB"/>
</dbReference>
<dbReference type="CDD" id="cd01525">
    <property type="entry name" value="RHOD_Kc"/>
    <property type="match status" value="1"/>
</dbReference>
<dbReference type="FunFam" id="1.10.472.80:FF:000015">
    <property type="entry name" value="TBC domain-containing protein kinase-like protein"/>
    <property type="match status" value="1"/>
</dbReference>
<dbReference type="FunFam" id="1.10.510.10:FF:000332">
    <property type="entry name" value="TBC domain-containing protein kinase-like protein"/>
    <property type="match status" value="1"/>
</dbReference>
<dbReference type="FunFam" id="3.40.250.10:FF:000018">
    <property type="entry name" value="TBC domain-containing protein kinase-like protein"/>
    <property type="match status" value="1"/>
</dbReference>
<dbReference type="FunFam" id="1.10.8.270:FF:000012">
    <property type="entry name" value="TBC domain-containing protein kinase-like protein-like"/>
    <property type="match status" value="1"/>
</dbReference>
<dbReference type="Gene3D" id="1.10.8.270">
    <property type="entry name" value="putative rabgap domain of human tbc1 domain family member 14 like domains"/>
    <property type="match status" value="1"/>
</dbReference>
<dbReference type="Gene3D" id="3.40.250.10">
    <property type="entry name" value="Rhodanese-like domain"/>
    <property type="match status" value="1"/>
</dbReference>
<dbReference type="Gene3D" id="1.10.510.10">
    <property type="entry name" value="Transferase(Phosphotransferase) domain 1"/>
    <property type="match status" value="1"/>
</dbReference>
<dbReference type="Gene3D" id="1.10.472.80">
    <property type="entry name" value="Ypt/Rab-GAP domain of gyp1p, domain 3"/>
    <property type="match status" value="1"/>
</dbReference>
<dbReference type="InterPro" id="IPR011009">
    <property type="entry name" value="Kinase-like_dom_sf"/>
</dbReference>
<dbReference type="InterPro" id="IPR000719">
    <property type="entry name" value="Prot_kinase_dom"/>
</dbReference>
<dbReference type="InterPro" id="IPR000195">
    <property type="entry name" value="Rab-GAP-TBC_dom"/>
</dbReference>
<dbReference type="InterPro" id="IPR035969">
    <property type="entry name" value="Rab-GAP_TBC_sf"/>
</dbReference>
<dbReference type="InterPro" id="IPR001763">
    <property type="entry name" value="Rhodanese-like_dom"/>
</dbReference>
<dbReference type="InterPro" id="IPR036873">
    <property type="entry name" value="Rhodanese-like_dom_sf"/>
</dbReference>
<dbReference type="PANTHER" id="PTHR24345">
    <property type="entry name" value="SERINE/THREONINE-PROTEIN KINASE PLK"/>
    <property type="match status" value="1"/>
</dbReference>
<dbReference type="PANTHER" id="PTHR24345:SF87">
    <property type="entry name" value="TBC1 DOMAIN CONTAINING KINASE"/>
    <property type="match status" value="1"/>
</dbReference>
<dbReference type="Pfam" id="PF00069">
    <property type="entry name" value="Pkinase"/>
    <property type="match status" value="1"/>
</dbReference>
<dbReference type="Pfam" id="PF00566">
    <property type="entry name" value="RabGAP-TBC"/>
    <property type="match status" value="1"/>
</dbReference>
<dbReference type="Pfam" id="PF00581">
    <property type="entry name" value="Rhodanese"/>
    <property type="match status" value="1"/>
</dbReference>
<dbReference type="SMART" id="SM00450">
    <property type="entry name" value="RHOD"/>
    <property type="match status" value="1"/>
</dbReference>
<dbReference type="SMART" id="SM00164">
    <property type="entry name" value="TBC"/>
    <property type="match status" value="1"/>
</dbReference>
<dbReference type="SUPFAM" id="SSF56112">
    <property type="entry name" value="Protein kinase-like (PK-like)"/>
    <property type="match status" value="1"/>
</dbReference>
<dbReference type="SUPFAM" id="SSF52821">
    <property type="entry name" value="Rhodanese/Cell cycle control phosphatase"/>
    <property type="match status" value="1"/>
</dbReference>
<dbReference type="SUPFAM" id="SSF47923">
    <property type="entry name" value="Ypt/Rab-GAP domain of gyp1p"/>
    <property type="match status" value="2"/>
</dbReference>
<dbReference type="PROSITE" id="PS50011">
    <property type="entry name" value="PROTEIN_KINASE_DOM"/>
    <property type="match status" value="1"/>
</dbReference>
<dbReference type="PROSITE" id="PS50206">
    <property type="entry name" value="RHODANESE_3"/>
    <property type="match status" value="1"/>
</dbReference>
<dbReference type="PROSITE" id="PS50086">
    <property type="entry name" value="TBC_RABGAP"/>
    <property type="match status" value="1"/>
</dbReference>
<protein>
    <recommendedName>
        <fullName>TBC domain-containing protein kinase-like protein</fullName>
    </recommendedName>
    <alternativeName>
        <fullName evidence="20">FERRY endosomal RAB5 effector complex subunit 1</fullName>
        <shortName evidence="20">Fy-1</shortName>
    </alternativeName>
</protein>